<evidence type="ECO:0000250" key="1"/>
<evidence type="ECO:0000250" key="2">
    <source>
        <dbReference type="UniProtKB" id="Q99616"/>
    </source>
</evidence>
<evidence type="ECO:0000255" key="3"/>
<evidence type="ECO:0000305" key="4"/>
<reference key="1">
    <citation type="submission" date="2004-02" db="EMBL/GenBank/DDBJ databases">
        <title>Expression analysis of monocyte chemotactic protein-4 (MCP-4/CCL13) gene in canine atopic dermatitis.</title>
        <authorList>
            <person name="Tsukui T."/>
            <person name="Sakaguchi M."/>
            <person name="Maeda S."/>
            <person name="Koyanagi M."/>
            <person name="Masuda K."/>
            <person name="Ohno K."/>
            <person name="Tsujimoto H."/>
            <person name="Iwabuchi S."/>
        </authorList>
    </citation>
    <scope>NUCLEOTIDE SEQUENCE [MRNA]</scope>
</reference>
<accession>Q68Y88</accession>
<dbReference type="EMBL" id="AB162849">
    <property type="protein sequence ID" value="BAD36827.1"/>
    <property type="molecule type" value="mRNA"/>
</dbReference>
<dbReference type="RefSeq" id="NP_001003966.1">
    <property type="nucleotide sequence ID" value="NM_001003966.1"/>
</dbReference>
<dbReference type="SMR" id="Q68Y88"/>
<dbReference type="FunCoup" id="Q68Y88">
    <property type="interactions" value="155"/>
</dbReference>
<dbReference type="STRING" id="9615.ENSCAFP00000032928"/>
<dbReference type="PaxDb" id="9612-ENSCAFP00000032928"/>
<dbReference type="Ensembl" id="ENSCAFT00000037424.3">
    <property type="protein sequence ID" value="ENSCAFP00000032928.3"/>
    <property type="gene ID" value="ENSCAFG00000024205.3"/>
</dbReference>
<dbReference type="Ensembl" id="ENSCAFT00030031740.1">
    <property type="protein sequence ID" value="ENSCAFP00030027680.1"/>
    <property type="gene ID" value="ENSCAFG00030017108.1"/>
</dbReference>
<dbReference type="Ensembl" id="ENSCAFT00845019830.1">
    <property type="protein sequence ID" value="ENSCAFP00845015525.1"/>
    <property type="gene ID" value="ENSCAFG00845011162.1"/>
</dbReference>
<dbReference type="GeneID" id="445451"/>
<dbReference type="KEGG" id="cfa:445451"/>
<dbReference type="CTD" id="6357"/>
<dbReference type="VEuPathDB" id="HostDB:ENSCAFG00845011162"/>
<dbReference type="eggNOG" id="ENOG502S776">
    <property type="taxonomic scope" value="Eukaryota"/>
</dbReference>
<dbReference type="GeneTree" id="ENSGT01130000278316"/>
<dbReference type="InParanoid" id="Q68Y88"/>
<dbReference type="OrthoDB" id="9404618at2759"/>
<dbReference type="Proteomes" id="UP000002254">
    <property type="component" value="Chromosome 9"/>
</dbReference>
<dbReference type="Proteomes" id="UP000694429">
    <property type="component" value="Chromosome 9"/>
</dbReference>
<dbReference type="Proteomes" id="UP000694542">
    <property type="component" value="Unplaced"/>
</dbReference>
<dbReference type="Proteomes" id="UP000805418">
    <property type="component" value="Chromosome 9"/>
</dbReference>
<dbReference type="GO" id="GO:0005615">
    <property type="term" value="C:extracellular space"/>
    <property type="evidence" value="ECO:0007669"/>
    <property type="project" value="UniProtKB-KW"/>
</dbReference>
<dbReference type="GO" id="GO:0008009">
    <property type="term" value="F:chemokine activity"/>
    <property type="evidence" value="ECO:0007669"/>
    <property type="project" value="Ensembl"/>
</dbReference>
<dbReference type="GO" id="GO:0061844">
    <property type="term" value="P:antimicrobial humoral immune response mediated by antimicrobial peptide"/>
    <property type="evidence" value="ECO:0007669"/>
    <property type="project" value="Ensembl"/>
</dbReference>
<dbReference type="GO" id="GO:0007010">
    <property type="term" value="P:cytoskeleton organization"/>
    <property type="evidence" value="ECO:0007669"/>
    <property type="project" value="Ensembl"/>
</dbReference>
<dbReference type="GO" id="GO:0048245">
    <property type="term" value="P:eosinophil chemotaxis"/>
    <property type="evidence" value="ECO:0007669"/>
    <property type="project" value="Ensembl"/>
</dbReference>
<dbReference type="GO" id="GO:0006954">
    <property type="term" value="P:inflammatory response"/>
    <property type="evidence" value="ECO:0007669"/>
    <property type="project" value="UniProtKB-KW"/>
</dbReference>
<dbReference type="GO" id="GO:0031640">
    <property type="term" value="P:killing of cells of another organism"/>
    <property type="evidence" value="ECO:0007669"/>
    <property type="project" value="Ensembl"/>
</dbReference>
<dbReference type="GO" id="GO:0008360">
    <property type="term" value="P:regulation of cell shape"/>
    <property type="evidence" value="ECO:0007669"/>
    <property type="project" value="Ensembl"/>
</dbReference>
<dbReference type="CDD" id="cd00272">
    <property type="entry name" value="Chemokine_CC"/>
    <property type="match status" value="1"/>
</dbReference>
<dbReference type="FunFam" id="2.40.50.40:FF:000002">
    <property type="entry name" value="C-C motif chemokine"/>
    <property type="match status" value="1"/>
</dbReference>
<dbReference type="Gene3D" id="2.40.50.40">
    <property type="match status" value="1"/>
</dbReference>
<dbReference type="InterPro" id="IPR039809">
    <property type="entry name" value="Chemokine_b/g/d"/>
</dbReference>
<dbReference type="InterPro" id="IPR000827">
    <property type="entry name" value="Chemokine_CC_CS"/>
</dbReference>
<dbReference type="InterPro" id="IPR001811">
    <property type="entry name" value="Chemokine_IL8-like_dom"/>
</dbReference>
<dbReference type="InterPro" id="IPR036048">
    <property type="entry name" value="Interleukin_8-like_sf"/>
</dbReference>
<dbReference type="PANTHER" id="PTHR12015:SF147">
    <property type="entry name" value="C-C MOTIF CHEMOKINE 13"/>
    <property type="match status" value="1"/>
</dbReference>
<dbReference type="PANTHER" id="PTHR12015">
    <property type="entry name" value="SMALL INDUCIBLE CYTOKINE A"/>
    <property type="match status" value="1"/>
</dbReference>
<dbReference type="Pfam" id="PF00048">
    <property type="entry name" value="IL8"/>
    <property type="match status" value="1"/>
</dbReference>
<dbReference type="PRINTS" id="PR01721">
    <property type="entry name" value="FRACTALKINE"/>
</dbReference>
<dbReference type="SMART" id="SM00199">
    <property type="entry name" value="SCY"/>
    <property type="match status" value="1"/>
</dbReference>
<dbReference type="SUPFAM" id="SSF54117">
    <property type="entry name" value="Interleukin 8-like chemokines"/>
    <property type="match status" value="1"/>
</dbReference>
<dbReference type="PROSITE" id="PS00472">
    <property type="entry name" value="SMALL_CYTOKINES_CC"/>
    <property type="match status" value="1"/>
</dbReference>
<feature type="signal peptide" evidence="3">
    <location>
        <begin position="1"/>
        <end position="23"/>
    </location>
</feature>
<feature type="chain" id="PRO_0000005200" description="C-C motif chemokine 13">
    <location>
        <begin position="24"/>
        <end position="98"/>
    </location>
</feature>
<feature type="modified residue" description="Pyrrolidone carboxylic acid" evidence="2 3">
    <location>
        <position position="24"/>
    </location>
</feature>
<feature type="disulfide bond" evidence="1">
    <location>
        <begin position="34"/>
        <end position="58"/>
    </location>
</feature>
<feature type="disulfide bond" evidence="1">
    <location>
        <begin position="35"/>
        <end position="74"/>
    </location>
</feature>
<proteinExistence type="inferred from homology"/>
<organism>
    <name type="scientific">Canis lupus familiaris</name>
    <name type="common">Dog</name>
    <name type="synonym">Canis familiaris</name>
    <dbReference type="NCBI Taxonomy" id="9615"/>
    <lineage>
        <taxon>Eukaryota</taxon>
        <taxon>Metazoa</taxon>
        <taxon>Chordata</taxon>
        <taxon>Craniata</taxon>
        <taxon>Vertebrata</taxon>
        <taxon>Euteleostomi</taxon>
        <taxon>Mammalia</taxon>
        <taxon>Eutheria</taxon>
        <taxon>Laurasiatheria</taxon>
        <taxon>Carnivora</taxon>
        <taxon>Caniformia</taxon>
        <taxon>Canidae</taxon>
        <taxon>Canis</taxon>
    </lineage>
</organism>
<name>CCL13_CANLF</name>
<protein>
    <recommendedName>
        <fullName>C-C motif chemokine 13</fullName>
    </recommendedName>
    <alternativeName>
        <fullName>Monocyte chemoattractant protein 4</fullName>
    </alternativeName>
    <alternativeName>
        <fullName>Monocyte chemotactic protein 4</fullName>
        <shortName>MCP-4</shortName>
    </alternativeName>
    <alternativeName>
        <fullName>Small-inducible cytokine A13</fullName>
    </alternativeName>
</protein>
<comment type="function">
    <text evidence="1">Chemotactic factor that attracts monocytes, lymphocytes, basophils and eosinophils, but not neutrophils. Signals through CCR2B and CCR3 receptors (By similarity).</text>
</comment>
<comment type="subcellular location">
    <subcellularLocation>
        <location evidence="1">Secreted</location>
    </subcellularLocation>
</comment>
<comment type="similarity">
    <text evidence="4">Belongs to the intercrine beta (chemokine CC) family.</text>
</comment>
<sequence length="98" mass="10980">MKVSAALLCLLLTAAILTTQVPAQPDALSALFTCCFTFNNKKIPLQRLESYRITSSHCPRKAVIFSTKLAKAICADPKEKWVQDYVKHLDQRTQTPKT</sequence>
<gene>
    <name type="primary">CCL13</name>
</gene>
<keyword id="KW-0145">Chemotaxis</keyword>
<keyword id="KW-0202">Cytokine</keyword>
<keyword id="KW-1015">Disulfide bond</keyword>
<keyword id="KW-0395">Inflammatory response</keyword>
<keyword id="KW-0873">Pyrrolidone carboxylic acid</keyword>
<keyword id="KW-1185">Reference proteome</keyword>
<keyword id="KW-0964">Secreted</keyword>
<keyword id="KW-0732">Signal</keyword>